<evidence type="ECO:0000250" key="1"/>
<evidence type="ECO:0000255" key="2">
    <source>
        <dbReference type="HAMAP-Rule" id="MF_02006"/>
    </source>
</evidence>
<name>SYY_SHIDS</name>
<proteinExistence type="inferred from homology"/>
<comment type="function">
    <text evidence="2">Catalyzes the attachment of tyrosine to tRNA(Tyr) in a two-step reaction: tyrosine is first activated by ATP to form Tyr-AMP and then transferred to the acceptor end of tRNA(Tyr).</text>
</comment>
<comment type="catalytic activity">
    <reaction evidence="2">
        <text>tRNA(Tyr) + L-tyrosine + ATP = L-tyrosyl-tRNA(Tyr) + AMP + diphosphate + H(+)</text>
        <dbReference type="Rhea" id="RHEA:10220"/>
        <dbReference type="Rhea" id="RHEA-COMP:9706"/>
        <dbReference type="Rhea" id="RHEA-COMP:9707"/>
        <dbReference type="ChEBI" id="CHEBI:15378"/>
        <dbReference type="ChEBI" id="CHEBI:30616"/>
        <dbReference type="ChEBI" id="CHEBI:33019"/>
        <dbReference type="ChEBI" id="CHEBI:58315"/>
        <dbReference type="ChEBI" id="CHEBI:78442"/>
        <dbReference type="ChEBI" id="CHEBI:78536"/>
        <dbReference type="ChEBI" id="CHEBI:456215"/>
        <dbReference type="EC" id="6.1.1.1"/>
    </reaction>
</comment>
<comment type="subunit">
    <text evidence="2">Homodimer.</text>
</comment>
<comment type="subcellular location">
    <subcellularLocation>
        <location evidence="2">Cytoplasm</location>
    </subcellularLocation>
</comment>
<comment type="similarity">
    <text evidence="2">Belongs to the class-I aminoacyl-tRNA synthetase family. TyrS type 1 subfamily.</text>
</comment>
<reference key="1">
    <citation type="journal article" date="2005" name="Nucleic Acids Res.">
        <title>Genome dynamics and diversity of Shigella species, the etiologic agents of bacillary dysentery.</title>
        <authorList>
            <person name="Yang F."/>
            <person name="Yang J."/>
            <person name="Zhang X."/>
            <person name="Chen L."/>
            <person name="Jiang Y."/>
            <person name="Yan Y."/>
            <person name="Tang X."/>
            <person name="Wang J."/>
            <person name="Xiong Z."/>
            <person name="Dong J."/>
            <person name="Xue Y."/>
            <person name="Zhu Y."/>
            <person name="Xu X."/>
            <person name="Sun L."/>
            <person name="Chen S."/>
            <person name="Nie H."/>
            <person name="Peng J."/>
            <person name="Xu J."/>
            <person name="Wang Y."/>
            <person name="Yuan Z."/>
            <person name="Wen Y."/>
            <person name="Yao Z."/>
            <person name="Shen Y."/>
            <person name="Qiang B."/>
            <person name="Hou Y."/>
            <person name="Yu J."/>
            <person name="Jin Q."/>
        </authorList>
    </citation>
    <scope>NUCLEOTIDE SEQUENCE [LARGE SCALE GENOMIC DNA]</scope>
    <source>
        <strain>Sd197</strain>
    </source>
</reference>
<gene>
    <name evidence="2" type="primary">tyrS</name>
    <name type="ordered locus">SDY_1860</name>
</gene>
<organism>
    <name type="scientific">Shigella dysenteriae serotype 1 (strain Sd197)</name>
    <dbReference type="NCBI Taxonomy" id="300267"/>
    <lineage>
        <taxon>Bacteria</taxon>
        <taxon>Pseudomonadati</taxon>
        <taxon>Pseudomonadota</taxon>
        <taxon>Gammaproteobacteria</taxon>
        <taxon>Enterobacterales</taxon>
        <taxon>Enterobacteriaceae</taxon>
        <taxon>Shigella</taxon>
    </lineage>
</organism>
<dbReference type="EC" id="6.1.1.1" evidence="2"/>
<dbReference type="EMBL" id="CP000034">
    <property type="protein sequence ID" value="ABB61969.1"/>
    <property type="molecule type" value="Genomic_DNA"/>
</dbReference>
<dbReference type="RefSeq" id="WP_011378747.1">
    <property type="nucleotide sequence ID" value="NC_007606.1"/>
</dbReference>
<dbReference type="RefSeq" id="YP_403460.1">
    <property type="nucleotide sequence ID" value="NC_007606.1"/>
</dbReference>
<dbReference type="SMR" id="Q32FD6"/>
<dbReference type="STRING" id="300267.SDY_1860"/>
<dbReference type="EnsemblBacteria" id="ABB61969">
    <property type="protein sequence ID" value="ABB61969"/>
    <property type="gene ID" value="SDY_1860"/>
</dbReference>
<dbReference type="KEGG" id="sdy:SDY_1860"/>
<dbReference type="PATRIC" id="fig|300267.13.peg.2239"/>
<dbReference type="HOGENOM" id="CLU_024003_0_3_6"/>
<dbReference type="Proteomes" id="UP000002716">
    <property type="component" value="Chromosome"/>
</dbReference>
<dbReference type="GO" id="GO:0005829">
    <property type="term" value="C:cytosol"/>
    <property type="evidence" value="ECO:0007669"/>
    <property type="project" value="TreeGrafter"/>
</dbReference>
<dbReference type="GO" id="GO:0005524">
    <property type="term" value="F:ATP binding"/>
    <property type="evidence" value="ECO:0007669"/>
    <property type="project" value="UniProtKB-UniRule"/>
</dbReference>
<dbReference type="GO" id="GO:0003723">
    <property type="term" value="F:RNA binding"/>
    <property type="evidence" value="ECO:0007669"/>
    <property type="project" value="UniProtKB-KW"/>
</dbReference>
<dbReference type="GO" id="GO:0004831">
    <property type="term" value="F:tyrosine-tRNA ligase activity"/>
    <property type="evidence" value="ECO:0007669"/>
    <property type="project" value="UniProtKB-UniRule"/>
</dbReference>
<dbReference type="GO" id="GO:0006437">
    <property type="term" value="P:tyrosyl-tRNA aminoacylation"/>
    <property type="evidence" value="ECO:0007669"/>
    <property type="project" value="UniProtKB-UniRule"/>
</dbReference>
<dbReference type="CDD" id="cd00165">
    <property type="entry name" value="S4"/>
    <property type="match status" value="1"/>
</dbReference>
<dbReference type="CDD" id="cd00805">
    <property type="entry name" value="TyrRS_core"/>
    <property type="match status" value="1"/>
</dbReference>
<dbReference type="FunFam" id="1.10.240.10:FF:000001">
    <property type="entry name" value="Tyrosine--tRNA ligase"/>
    <property type="match status" value="1"/>
</dbReference>
<dbReference type="FunFam" id="3.10.290.10:FF:000007">
    <property type="entry name" value="Tyrosine--tRNA ligase"/>
    <property type="match status" value="1"/>
</dbReference>
<dbReference type="FunFam" id="3.40.50.620:FF:000008">
    <property type="entry name" value="Tyrosine--tRNA ligase"/>
    <property type="match status" value="1"/>
</dbReference>
<dbReference type="Gene3D" id="3.40.50.620">
    <property type="entry name" value="HUPs"/>
    <property type="match status" value="1"/>
</dbReference>
<dbReference type="Gene3D" id="3.10.290.10">
    <property type="entry name" value="RNA-binding S4 domain"/>
    <property type="match status" value="1"/>
</dbReference>
<dbReference type="Gene3D" id="1.10.240.10">
    <property type="entry name" value="Tyrosyl-Transfer RNA Synthetase"/>
    <property type="match status" value="1"/>
</dbReference>
<dbReference type="HAMAP" id="MF_02006">
    <property type="entry name" value="Tyr_tRNA_synth_type1"/>
    <property type="match status" value="1"/>
</dbReference>
<dbReference type="InterPro" id="IPR001412">
    <property type="entry name" value="aa-tRNA-synth_I_CS"/>
</dbReference>
<dbReference type="InterPro" id="IPR002305">
    <property type="entry name" value="aa-tRNA-synth_Ic"/>
</dbReference>
<dbReference type="InterPro" id="IPR014729">
    <property type="entry name" value="Rossmann-like_a/b/a_fold"/>
</dbReference>
<dbReference type="InterPro" id="IPR002942">
    <property type="entry name" value="S4_RNA-bd"/>
</dbReference>
<dbReference type="InterPro" id="IPR036986">
    <property type="entry name" value="S4_RNA-bd_sf"/>
</dbReference>
<dbReference type="InterPro" id="IPR054608">
    <property type="entry name" value="SYY-like_C"/>
</dbReference>
<dbReference type="InterPro" id="IPR002307">
    <property type="entry name" value="Tyr-tRNA-ligase"/>
</dbReference>
<dbReference type="InterPro" id="IPR024088">
    <property type="entry name" value="Tyr-tRNA-ligase_bac-type"/>
</dbReference>
<dbReference type="InterPro" id="IPR024107">
    <property type="entry name" value="Tyr-tRNA-ligase_bac_1"/>
</dbReference>
<dbReference type="NCBIfam" id="TIGR00234">
    <property type="entry name" value="tyrS"/>
    <property type="match status" value="1"/>
</dbReference>
<dbReference type="PANTHER" id="PTHR11766:SF0">
    <property type="entry name" value="TYROSINE--TRNA LIGASE, MITOCHONDRIAL"/>
    <property type="match status" value="1"/>
</dbReference>
<dbReference type="PANTHER" id="PTHR11766">
    <property type="entry name" value="TYROSYL-TRNA SYNTHETASE"/>
    <property type="match status" value="1"/>
</dbReference>
<dbReference type="Pfam" id="PF22421">
    <property type="entry name" value="SYY_C-terminal"/>
    <property type="match status" value="1"/>
</dbReference>
<dbReference type="Pfam" id="PF00579">
    <property type="entry name" value="tRNA-synt_1b"/>
    <property type="match status" value="1"/>
</dbReference>
<dbReference type="PRINTS" id="PR01040">
    <property type="entry name" value="TRNASYNTHTYR"/>
</dbReference>
<dbReference type="SMART" id="SM00363">
    <property type="entry name" value="S4"/>
    <property type="match status" value="1"/>
</dbReference>
<dbReference type="SUPFAM" id="SSF55174">
    <property type="entry name" value="Alpha-L RNA-binding motif"/>
    <property type="match status" value="1"/>
</dbReference>
<dbReference type="SUPFAM" id="SSF52374">
    <property type="entry name" value="Nucleotidylyl transferase"/>
    <property type="match status" value="1"/>
</dbReference>
<dbReference type="PROSITE" id="PS00178">
    <property type="entry name" value="AA_TRNA_LIGASE_I"/>
    <property type="match status" value="1"/>
</dbReference>
<dbReference type="PROSITE" id="PS50889">
    <property type="entry name" value="S4"/>
    <property type="match status" value="1"/>
</dbReference>
<protein>
    <recommendedName>
        <fullName evidence="2">Tyrosine--tRNA ligase</fullName>
        <ecNumber evidence="2">6.1.1.1</ecNumber>
    </recommendedName>
    <alternativeName>
        <fullName evidence="2">Tyrosyl-tRNA synthetase</fullName>
        <shortName evidence="2">TyrRS</shortName>
    </alternativeName>
</protein>
<sequence length="424" mass="47539">MASSNLIKQLQERGLVAQVTDEEALAERLAQGPIALYCGFDPTADSLHLGHLVPLLCLKRFQQAGHKPVALVGGATGLIGDPSFKAAERKLNTEETVQEWVDKIRKQVAPFLDFDCGENSAIAANNYDWFGNMNVLTFLRDIGKHFSVNQMINKEAVKQRLNREDQGISFIEFSYNLLQGYDFACLNKQYGVVLQIGGSDQWGNITSGIDLTRRLHQNQVFGLTVPLITKADGTKFGKTEGGAVWLDPKKTSPYKFYQFWINTADADVYRFLKFFTFMSIEEINALEEEDKNSGKAPRAQYVLAEQVTRLVHGEEGLQAAKRITECLFSGSLSALSEADFEQLAQDGVPMVEMEKGADLMQALVDSELQPSRGQARKTIASNAITINGEKQSDPEYFFKEEDRLFGRFTLLRRGKKNYCLICWK</sequence>
<feature type="initiator methionine" description="Removed" evidence="1">
    <location>
        <position position="1"/>
    </location>
</feature>
<feature type="chain" id="PRO_0000234767" description="Tyrosine--tRNA ligase">
    <location>
        <begin position="2"/>
        <end position="424"/>
    </location>
</feature>
<feature type="domain" description="S4 RNA-binding" evidence="2">
    <location>
        <begin position="357"/>
        <end position="414"/>
    </location>
</feature>
<feature type="short sequence motif" description="'HIGH' region">
    <location>
        <begin position="42"/>
        <end position="51"/>
    </location>
</feature>
<feature type="short sequence motif" description="'KMSKS' region">
    <location>
        <begin position="235"/>
        <end position="239"/>
    </location>
</feature>
<feature type="binding site" evidence="2">
    <location>
        <position position="37"/>
    </location>
    <ligand>
        <name>L-tyrosine</name>
        <dbReference type="ChEBI" id="CHEBI:58315"/>
    </ligand>
</feature>
<feature type="binding site" evidence="2">
    <location>
        <position position="175"/>
    </location>
    <ligand>
        <name>L-tyrosine</name>
        <dbReference type="ChEBI" id="CHEBI:58315"/>
    </ligand>
</feature>
<feature type="binding site" evidence="2">
    <location>
        <position position="179"/>
    </location>
    <ligand>
        <name>L-tyrosine</name>
        <dbReference type="ChEBI" id="CHEBI:58315"/>
    </ligand>
</feature>
<feature type="binding site" evidence="2">
    <location>
        <position position="238"/>
    </location>
    <ligand>
        <name>ATP</name>
        <dbReference type="ChEBI" id="CHEBI:30616"/>
    </ligand>
</feature>
<feature type="modified residue" description="N6-acetyllysine" evidence="2">
    <location>
        <position position="144"/>
    </location>
</feature>
<accession>Q32FD6</accession>
<keyword id="KW-0007">Acetylation</keyword>
<keyword id="KW-0030">Aminoacyl-tRNA synthetase</keyword>
<keyword id="KW-0067">ATP-binding</keyword>
<keyword id="KW-0963">Cytoplasm</keyword>
<keyword id="KW-0436">Ligase</keyword>
<keyword id="KW-0547">Nucleotide-binding</keyword>
<keyword id="KW-0648">Protein biosynthesis</keyword>
<keyword id="KW-1185">Reference proteome</keyword>
<keyword id="KW-0694">RNA-binding</keyword>